<accession>A7UI09</accession>
<organism>
    <name type="scientific">Trichophyton equinum</name>
    <name type="common">Horse ringworm fungus</name>
    <dbReference type="NCBI Taxonomy" id="63418"/>
    <lineage>
        <taxon>Eukaryota</taxon>
        <taxon>Fungi</taxon>
        <taxon>Dikarya</taxon>
        <taxon>Ascomycota</taxon>
        <taxon>Pezizomycotina</taxon>
        <taxon>Eurotiomycetes</taxon>
        <taxon>Eurotiomycetidae</taxon>
        <taxon>Onygenales</taxon>
        <taxon>Arthrodermataceae</taxon>
        <taxon>Trichophyton</taxon>
    </lineage>
</organism>
<gene>
    <name type="primary">LAP2</name>
</gene>
<comment type="function">
    <text>Extracellular aminopeptidase that releases a wide variety of amino acids from natural peptides and contributes to pathogenicity.</text>
</comment>
<comment type="cofactor">
    <cofactor evidence="2">
        <name>Zn(2+)</name>
        <dbReference type="ChEBI" id="CHEBI:29105"/>
    </cofactor>
    <text evidence="2">Binds 2 Zn(2+) ions per subunit.</text>
</comment>
<comment type="subunit">
    <text evidence="1">Monomer.</text>
</comment>
<comment type="subcellular location">
    <subcellularLocation>
        <location evidence="1">Secreted</location>
    </subcellularLocation>
</comment>
<comment type="similarity">
    <text evidence="4">Belongs to the peptidase M28 family. M28A subfamily.</text>
</comment>
<proteinExistence type="inferred from homology"/>
<evidence type="ECO:0000250" key="1"/>
<evidence type="ECO:0000250" key="2">
    <source>
        <dbReference type="UniProtKB" id="P80561"/>
    </source>
</evidence>
<evidence type="ECO:0000255" key="3"/>
<evidence type="ECO:0000305" key="4"/>
<keyword id="KW-0031">Aminopeptidase</keyword>
<keyword id="KW-0325">Glycoprotein</keyword>
<keyword id="KW-0378">Hydrolase</keyword>
<keyword id="KW-0479">Metal-binding</keyword>
<keyword id="KW-0482">Metalloprotease</keyword>
<keyword id="KW-0645">Protease</keyword>
<keyword id="KW-0964">Secreted</keyword>
<keyword id="KW-0732">Signal</keyword>
<keyword id="KW-0843">Virulence</keyword>
<keyword id="KW-0862">Zinc</keyword>
<sequence>MKSQLLSLAVAVSTISQGVVGQEPFGWPFKPMVTQDDLQNKIKLKDIMAGVEKLQSFSDAHPEKNRVFGGNGHKDTVEWIYNELKATGYYNVKKQEQVHLWSHAEAALSANGKDLKASAMSYSPPANKIMAELVVAKNNGCNATDYPENTQGKIVLIQRGVCSFGEKSSQAGDAKAIGAVVYNNVPGSLAGTLGGLDKRHVPTAGLSQEDGKNLASLVASGKVDVTMNVVSLFENRTTWNVIAETKGGDHNNVVMLGAHSDSVDAGPGINDNGSGSIGIMTVAKALTNFKLNNAVRFAWWTAEEFGLLGSTFYVDSLDDRELHKVKLYLNFDMIGSPNFANQIYDGDGSAYNMTGPAGSAEIEYLFEKFFDDQGLPHQPTAFTGRSDYSAFIKRNVPAGGLFTGAEVVKTPEQVKLFGGEAGVAYDKNYHGKGDTVANINKGAIFLNTRAIAYSVAEYARSLKGFPTRPKTGKRAVNPQYAKMPGGGCGHHTVFM</sequence>
<name>LAP2_TRIEQ</name>
<dbReference type="EC" id="3.4.11.-"/>
<dbReference type="EMBL" id="EU072467">
    <property type="protein sequence ID" value="ABU49644.1"/>
    <property type="molecule type" value="Genomic_DNA"/>
</dbReference>
<dbReference type="SMR" id="A7UI09"/>
<dbReference type="GlyCosmos" id="A7UI09">
    <property type="glycosylation" value="4 sites, No reported glycans"/>
</dbReference>
<dbReference type="VEuPathDB" id="FungiDB:TEQG_05395"/>
<dbReference type="GO" id="GO:0005576">
    <property type="term" value="C:extracellular region"/>
    <property type="evidence" value="ECO:0007669"/>
    <property type="project" value="UniProtKB-SubCell"/>
</dbReference>
<dbReference type="GO" id="GO:0004177">
    <property type="term" value="F:aminopeptidase activity"/>
    <property type="evidence" value="ECO:0007669"/>
    <property type="project" value="UniProtKB-KW"/>
</dbReference>
<dbReference type="GO" id="GO:0046872">
    <property type="term" value="F:metal ion binding"/>
    <property type="evidence" value="ECO:0007669"/>
    <property type="project" value="UniProtKB-KW"/>
</dbReference>
<dbReference type="GO" id="GO:0008235">
    <property type="term" value="F:metalloexopeptidase activity"/>
    <property type="evidence" value="ECO:0007669"/>
    <property type="project" value="InterPro"/>
</dbReference>
<dbReference type="GO" id="GO:0006508">
    <property type="term" value="P:proteolysis"/>
    <property type="evidence" value="ECO:0007669"/>
    <property type="project" value="UniProtKB-KW"/>
</dbReference>
<dbReference type="CDD" id="cd03876">
    <property type="entry name" value="M28_SGAP_like"/>
    <property type="match status" value="1"/>
</dbReference>
<dbReference type="CDD" id="cd02130">
    <property type="entry name" value="PA_ScAPY_like"/>
    <property type="match status" value="1"/>
</dbReference>
<dbReference type="FunFam" id="3.40.630.10:FF:000054">
    <property type="entry name" value="Peptide hydrolase"/>
    <property type="match status" value="1"/>
</dbReference>
<dbReference type="Gene3D" id="3.50.30.30">
    <property type="match status" value="1"/>
</dbReference>
<dbReference type="Gene3D" id="3.40.630.10">
    <property type="entry name" value="Zn peptidases"/>
    <property type="match status" value="1"/>
</dbReference>
<dbReference type="InterPro" id="IPR045175">
    <property type="entry name" value="M28_fam"/>
</dbReference>
<dbReference type="InterPro" id="IPR041756">
    <property type="entry name" value="M28_SGAP-like"/>
</dbReference>
<dbReference type="InterPro" id="IPR046450">
    <property type="entry name" value="PA_dom_sf"/>
</dbReference>
<dbReference type="InterPro" id="IPR003137">
    <property type="entry name" value="PA_domain"/>
</dbReference>
<dbReference type="InterPro" id="IPR007484">
    <property type="entry name" value="Peptidase_M28"/>
</dbReference>
<dbReference type="PANTHER" id="PTHR12147">
    <property type="entry name" value="METALLOPEPTIDASE M28 FAMILY MEMBER"/>
    <property type="match status" value="1"/>
</dbReference>
<dbReference type="PANTHER" id="PTHR12147:SF57">
    <property type="entry name" value="PEPTIDE HYDROLASE"/>
    <property type="match status" value="1"/>
</dbReference>
<dbReference type="Pfam" id="PF02225">
    <property type="entry name" value="PA"/>
    <property type="match status" value="1"/>
</dbReference>
<dbReference type="Pfam" id="PF04389">
    <property type="entry name" value="Peptidase_M28"/>
    <property type="match status" value="1"/>
</dbReference>
<dbReference type="SUPFAM" id="SSF52025">
    <property type="entry name" value="PA domain"/>
    <property type="match status" value="1"/>
</dbReference>
<dbReference type="SUPFAM" id="SSF53187">
    <property type="entry name" value="Zn-dependent exopeptidases"/>
    <property type="match status" value="1"/>
</dbReference>
<feature type="signal peptide" evidence="3">
    <location>
        <begin position="1"/>
        <end position="21"/>
    </location>
</feature>
<feature type="chain" id="PRO_0000384095" description="Leucine aminopeptidase 2">
    <location>
        <begin position="22"/>
        <end position="495"/>
    </location>
</feature>
<feature type="domain" description="PA">
    <location>
        <begin position="124"/>
        <end position="218"/>
    </location>
</feature>
<feature type="active site" description="Proton acceptor" evidence="2">
    <location>
        <position position="303"/>
    </location>
</feature>
<feature type="binding site" evidence="2">
    <location>
        <position position="259"/>
    </location>
    <ligand>
        <name>Zn(2+)</name>
        <dbReference type="ChEBI" id="CHEBI:29105"/>
        <label>1</label>
        <note>catalytic</note>
    </ligand>
</feature>
<feature type="binding site" evidence="2">
    <location>
        <position position="271"/>
    </location>
    <ligand>
        <name>Zn(2+)</name>
        <dbReference type="ChEBI" id="CHEBI:29105"/>
        <label>1</label>
        <note>catalytic</note>
    </ligand>
</feature>
<feature type="binding site" evidence="2">
    <location>
        <position position="271"/>
    </location>
    <ligand>
        <name>Zn(2+)</name>
        <dbReference type="ChEBI" id="CHEBI:29105"/>
        <label>2</label>
        <note>catalytic</note>
    </ligand>
</feature>
<feature type="binding site" evidence="2">
    <location>
        <position position="304"/>
    </location>
    <ligand>
        <name>Zn(2+)</name>
        <dbReference type="ChEBI" id="CHEBI:29105"/>
        <label>2</label>
        <note>catalytic</note>
    </ligand>
</feature>
<feature type="binding site" evidence="2">
    <location>
        <position position="332"/>
    </location>
    <ligand>
        <name>Zn(2+)</name>
        <dbReference type="ChEBI" id="CHEBI:29105"/>
        <label>1</label>
        <note>catalytic</note>
    </ligand>
</feature>
<feature type="binding site" evidence="2">
    <location>
        <position position="430"/>
    </location>
    <ligand>
        <name>Zn(2+)</name>
        <dbReference type="ChEBI" id="CHEBI:29105"/>
        <label>2</label>
        <note>catalytic</note>
    </ligand>
</feature>
<feature type="site" description="Transition state stabilizer" evidence="2">
    <location>
        <position position="429"/>
    </location>
</feature>
<feature type="glycosylation site" description="N-linked (GlcNAc...) asparagine" evidence="3">
    <location>
        <position position="142"/>
    </location>
</feature>
<feature type="glycosylation site" description="N-linked (GlcNAc...) asparagine" evidence="3">
    <location>
        <position position="235"/>
    </location>
</feature>
<feature type="glycosylation site" description="N-linked (GlcNAc...) asparagine" evidence="3">
    <location>
        <position position="272"/>
    </location>
</feature>
<feature type="glycosylation site" description="N-linked (GlcNAc...) asparagine" evidence="3">
    <location>
        <position position="352"/>
    </location>
</feature>
<reference key="1">
    <citation type="submission" date="2007-07" db="EMBL/GenBank/DDBJ databases">
        <title>Comparing putative pathogenicity factors between Trichophyton tonsurans and Trichophyton equinum.</title>
        <authorList>
            <person name="Preuett B.L."/>
            <person name="Brown J.T."/>
            <person name="Abdel-Rahman S.M."/>
        </authorList>
    </citation>
    <scope>NUCLEOTIDE SEQUENCE [GENOMIC DNA]</scope>
</reference>
<protein>
    <recommendedName>
        <fullName>Leucine aminopeptidase 2</fullName>
        <ecNumber>3.4.11.-</ecNumber>
    </recommendedName>
    <alternativeName>
        <fullName>Leucyl aminopeptidase 2</fullName>
        <shortName>LAP2</shortName>
    </alternativeName>
</protein>